<feature type="chain" id="PRO_0000199944" description="Sulfite reductase [NADPH] flavoprotein alpha-component">
    <location>
        <begin position="1"/>
        <end position="606"/>
    </location>
</feature>
<feature type="domain" description="Flavodoxin-like" evidence="1">
    <location>
        <begin position="64"/>
        <end position="202"/>
    </location>
</feature>
<feature type="domain" description="FAD-binding FR-type" evidence="1">
    <location>
        <begin position="241"/>
        <end position="455"/>
    </location>
</feature>
<feature type="region of interest" description="Disordered" evidence="2">
    <location>
        <begin position="212"/>
        <end position="235"/>
    </location>
</feature>
<feature type="compositionally biased region" description="Low complexity" evidence="2">
    <location>
        <begin position="212"/>
        <end position="234"/>
    </location>
</feature>
<feature type="binding site" evidence="1">
    <location>
        <begin position="70"/>
        <end position="75"/>
    </location>
    <ligand>
        <name>FMN</name>
        <dbReference type="ChEBI" id="CHEBI:58210"/>
    </ligand>
</feature>
<feature type="binding site" evidence="1">
    <location>
        <begin position="117"/>
        <end position="120"/>
    </location>
    <ligand>
        <name>FMN</name>
        <dbReference type="ChEBI" id="CHEBI:58210"/>
    </ligand>
</feature>
<feature type="binding site" evidence="1">
    <location>
        <begin position="153"/>
        <end position="162"/>
    </location>
    <ligand>
        <name>FMN</name>
        <dbReference type="ChEBI" id="CHEBI:58210"/>
    </ligand>
</feature>
<feature type="binding site" evidence="1">
    <location>
        <position position="329"/>
    </location>
    <ligand>
        <name>FAD</name>
        <dbReference type="ChEBI" id="CHEBI:57692"/>
    </ligand>
</feature>
<feature type="binding site" evidence="1">
    <location>
        <position position="363"/>
    </location>
    <ligand>
        <name>FAD</name>
        <dbReference type="ChEBI" id="CHEBI:57692"/>
    </ligand>
</feature>
<feature type="binding site" evidence="1">
    <location>
        <begin position="393"/>
        <end position="396"/>
    </location>
    <ligand>
        <name>FAD</name>
        <dbReference type="ChEBI" id="CHEBI:57692"/>
    </ligand>
</feature>
<feature type="binding site" evidence="1">
    <location>
        <begin position="411"/>
        <end position="413"/>
    </location>
    <ligand>
        <name>FAD</name>
        <dbReference type="ChEBI" id="CHEBI:57692"/>
    </ligand>
</feature>
<feature type="binding site" evidence="1">
    <location>
        <position position="417"/>
    </location>
    <ligand>
        <name>FAD</name>
        <dbReference type="ChEBI" id="CHEBI:57692"/>
    </ligand>
</feature>
<feature type="binding site" evidence="1">
    <location>
        <begin position="426"/>
        <end position="429"/>
    </location>
    <ligand>
        <name>FAD</name>
        <dbReference type="ChEBI" id="CHEBI:57692"/>
    </ligand>
</feature>
<feature type="binding site" evidence="1">
    <location>
        <begin position="526"/>
        <end position="527"/>
    </location>
    <ligand>
        <name>NADP(+)</name>
        <dbReference type="ChEBI" id="CHEBI:58349"/>
    </ligand>
</feature>
<feature type="binding site" evidence="1">
    <location>
        <begin position="532"/>
        <end position="536"/>
    </location>
    <ligand>
        <name>NADP(+)</name>
        <dbReference type="ChEBI" id="CHEBI:58349"/>
    </ligand>
</feature>
<feature type="binding site" evidence="1">
    <location>
        <position position="568"/>
    </location>
    <ligand>
        <name>NADP(+)</name>
        <dbReference type="ChEBI" id="CHEBI:58349"/>
    </ligand>
</feature>
<feature type="binding site" evidence="1">
    <location>
        <position position="606"/>
    </location>
    <ligand>
        <name>FAD</name>
        <dbReference type="ChEBI" id="CHEBI:57692"/>
    </ligand>
</feature>
<feature type="sequence conflict" description="In Ref. 2 and 3." evidence="3" ref="2 3">
    <original>Q</original>
    <variation>QFIAPTQ</variation>
    <location>
        <position position="218"/>
    </location>
</feature>
<name>CYSJ_YERPE</name>
<reference key="1">
    <citation type="journal article" date="2001" name="Nature">
        <title>Genome sequence of Yersinia pestis, the causative agent of plague.</title>
        <authorList>
            <person name="Parkhill J."/>
            <person name="Wren B.W."/>
            <person name="Thomson N.R."/>
            <person name="Titball R.W."/>
            <person name="Holden M.T.G."/>
            <person name="Prentice M.B."/>
            <person name="Sebaihia M."/>
            <person name="James K.D."/>
            <person name="Churcher C.M."/>
            <person name="Mungall K.L."/>
            <person name="Baker S."/>
            <person name="Basham D."/>
            <person name="Bentley S.D."/>
            <person name="Brooks K."/>
            <person name="Cerdeno-Tarraga A.-M."/>
            <person name="Chillingworth T."/>
            <person name="Cronin A."/>
            <person name="Davies R.M."/>
            <person name="Davis P."/>
            <person name="Dougan G."/>
            <person name="Feltwell T."/>
            <person name="Hamlin N."/>
            <person name="Holroyd S."/>
            <person name="Jagels K."/>
            <person name="Karlyshev A.V."/>
            <person name="Leather S."/>
            <person name="Moule S."/>
            <person name="Oyston P.C.F."/>
            <person name="Quail M.A."/>
            <person name="Rutherford K.M."/>
            <person name="Simmonds M."/>
            <person name="Skelton J."/>
            <person name="Stevens K."/>
            <person name="Whitehead S."/>
            <person name="Barrell B.G."/>
        </authorList>
    </citation>
    <scope>NUCLEOTIDE SEQUENCE [LARGE SCALE GENOMIC DNA]</scope>
    <source>
        <strain>CO-92 / Biovar Orientalis</strain>
    </source>
</reference>
<reference key="2">
    <citation type="journal article" date="2002" name="J. Bacteriol.">
        <title>Genome sequence of Yersinia pestis KIM.</title>
        <authorList>
            <person name="Deng W."/>
            <person name="Burland V."/>
            <person name="Plunkett G. III"/>
            <person name="Boutin A."/>
            <person name="Mayhew G.F."/>
            <person name="Liss P."/>
            <person name="Perna N.T."/>
            <person name="Rose D.J."/>
            <person name="Mau B."/>
            <person name="Zhou S."/>
            <person name="Schwartz D.C."/>
            <person name="Fetherston J.D."/>
            <person name="Lindler L.E."/>
            <person name="Brubaker R.R."/>
            <person name="Plano G.V."/>
            <person name="Straley S.C."/>
            <person name="McDonough K.A."/>
            <person name="Nilles M.L."/>
            <person name="Matson J.S."/>
            <person name="Blattner F.R."/>
            <person name="Perry R.D."/>
        </authorList>
    </citation>
    <scope>NUCLEOTIDE SEQUENCE [LARGE SCALE GENOMIC DNA]</scope>
    <source>
        <strain>KIM10+ / Biovar Mediaevalis</strain>
    </source>
</reference>
<reference key="3">
    <citation type="journal article" date="2004" name="DNA Res.">
        <title>Complete genome sequence of Yersinia pestis strain 91001, an isolate avirulent to humans.</title>
        <authorList>
            <person name="Song Y."/>
            <person name="Tong Z."/>
            <person name="Wang J."/>
            <person name="Wang L."/>
            <person name="Guo Z."/>
            <person name="Han Y."/>
            <person name="Zhang J."/>
            <person name="Pei D."/>
            <person name="Zhou D."/>
            <person name="Qin H."/>
            <person name="Pang X."/>
            <person name="Han Y."/>
            <person name="Zhai J."/>
            <person name="Li M."/>
            <person name="Cui B."/>
            <person name="Qi Z."/>
            <person name="Jin L."/>
            <person name="Dai R."/>
            <person name="Chen F."/>
            <person name="Li S."/>
            <person name="Ye C."/>
            <person name="Du Z."/>
            <person name="Lin W."/>
            <person name="Wang J."/>
            <person name="Yu J."/>
            <person name="Yang H."/>
            <person name="Wang J."/>
            <person name="Huang P."/>
            <person name="Yang R."/>
        </authorList>
    </citation>
    <scope>NUCLEOTIDE SEQUENCE [LARGE SCALE GENOMIC DNA]</scope>
    <source>
        <strain>91001 / Biovar Mediaevalis</strain>
    </source>
</reference>
<gene>
    <name evidence="1" type="primary">cysJ</name>
    <name type="ordered locus">YPO3372</name>
    <name type="ordered locus">y0818</name>
    <name type="ordered locus">YP_0314</name>
</gene>
<keyword id="KW-0028">Amino-acid biosynthesis</keyword>
<keyword id="KW-0198">Cysteine biosynthesis</keyword>
<keyword id="KW-0249">Electron transport</keyword>
<keyword id="KW-0274">FAD</keyword>
<keyword id="KW-0285">Flavoprotein</keyword>
<keyword id="KW-0288">FMN</keyword>
<keyword id="KW-0521">NADP</keyword>
<keyword id="KW-0560">Oxidoreductase</keyword>
<keyword id="KW-1185">Reference proteome</keyword>
<keyword id="KW-0813">Transport</keyword>
<proteinExistence type="inferred from homology"/>
<protein>
    <recommendedName>
        <fullName evidence="1">Sulfite reductase [NADPH] flavoprotein alpha-component</fullName>
        <shortName evidence="1">SiR-FP</shortName>
        <ecNumber evidence="1">1.8.1.2</ecNumber>
    </recommendedName>
</protein>
<comment type="function">
    <text evidence="1">Component of the sulfite reductase complex that catalyzes the 6-electron reduction of sulfite to sulfide. This is one of several activities required for the biosynthesis of L-cysteine from sulfate. The flavoprotein component catalyzes the electron flow from NADPH -&gt; FAD -&gt; FMN to the hemoprotein component.</text>
</comment>
<comment type="catalytic activity">
    <reaction evidence="1">
        <text>hydrogen sulfide + 3 NADP(+) + 3 H2O = sulfite + 3 NADPH + 4 H(+)</text>
        <dbReference type="Rhea" id="RHEA:13801"/>
        <dbReference type="ChEBI" id="CHEBI:15377"/>
        <dbReference type="ChEBI" id="CHEBI:15378"/>
        <dbReference type="ChEBI" id="CHEBI:17359"/>
        <dbReference type="ChEBI" id="CHEBI:29919"/>
        <dbReference type="ChEBI" id="CHEBI:57783"/>
        <dbReference type="ChEBI" id="CHEBI:58349"/>
        <dbReference type="EC" id="1.8.1.2"/>
    </reaction>
</comment>
<comment type="cofactor">
    <cofactor evidence="1">
        <name>FAD</name>
        <dbReference type="ChEBI" id="CHEBI:57692"/>
    </cofactor>
    <text evidence="1">Binds 1 FAD per subunit.</text>
</comment>
<comment type="cofactor">
    <cofactor evidence="1">
        <name>FMN</name>
        <dbReference type="ChEBI" id="CHEBI:58210"/>
    </cofactor>
    <text evidence="1">Binds 1 FMN per subunit.</text>
</comment>
<comment type="pathway">
    <text evidence="1">Sulfur metabolism; hydrogen sulfide biosynthesis; hydrogen sulfide from sulfite (NADPH route): step 1/1.</text>
</comment>
<comment type="subunit">
    <text evidence="1">Alpha(8)-beta(8). The alpha component is a flavoprotein, the beta component is a hemoprotein.</text>
</comment>
<comment type="similarity">
    <text evidence="1">Belongs to the NADPH-dependent sulphite reductase flavoprotein subunit CysJ family.</text>
</comment>
<comment type="similarity">
    <text evidence="1">In the N-terminal section; belongs to the flavodoxin family.</text>
</comment>
<comment type="similarity">
    <text evidence="1">In the C-terminal section; belongs to the flavoprotein pyridine nucleotide cytochrome reductase family.</text>
</comment>
<comment type="sequence caution" evidence="3">
    <conflict type="erroneous initiation">
        <sequence resource="EMBL-CDS" id="AAM84405"/>
    </conflict>
</comment>
<comment type="sequence caution" evidence="3">
    <conflict type="erroneous initiation">
        <sequence resource="EMBL-CDS" id="AAS60589"/>
    </conflict>
</comment>
<sequence length="606" mass="66625">MTTQAPPTSLLPLSPEQLARLQAAVGEFSPTQMAWLSGYFWGMVNQQPGAVASPAVAAPPPVTVTLISASQTGNARRLAEQLRDDLLAAQLSVNLVNAGDYKFKQIAQERLLVVVASTQGEGEPAEEAVALHKFLFSKKAPKLSETAFAVFGLGDTSYEHFCQAGKDFDSKLAELGAQRLLDRVDADVEYQVQAQQWRQQVVATLQAKVPAQSTAPTQSTTPAAAAITSGGTTTVSPYSKTAPLTAQLSVQQKVTGRNSEKDVRHIEIDLGDSGLRYQPGDALGVWFDNDPALVEELLALLWLKGDEPVSIDGQNMPLAQALLSHLELTQNTTLIVDKYAALSRDETLIALLADKPALQLYAKNTPFVDMVRQAPSDLNADQLVGLLRPLTPRLYSIASSQAETENEVHITVGVVRYDIDGRARSGGASGYLADRLEVDGDIRVFIEHNDNFRLPANPETPVIMIGPGTGIAPFRAFMQQREVDGASGKNWLFFGNPHFTEDFLYQVEWQRYVKEGVLTRIDLAWSRDQAHKIYVQDKLREQGAELWNWIQQGAHIYVCGDANRMAKDVEQVLLDVVALHGAMDAEQADEYLSELRQARRYQRDVY</sequence>
<evidence type="ECO:0000255" key="1">
    <source>
        <dbReference type="HAMAP-Rule" id="MF_01541"/>
    </source>
</evidence>
<evidence type="ECO:0000256" key="2">
    <source>
        <dbReference type="SAM" id="MobiDB-lite"/>
    </source>
</evidence>
<evidence type="ECO:0000305" key="3"/>
<accession>Q8ZBN6</accession>
<accession>Q0WBS4</accession>
<accession>Q74XS5</accession>
<accession>Q8D198</accession>
<organism>
    <name type="scientific">Yersinia pestis</name>
    <dbReference type="NCBI Taxonomy" id="632"/>
    <lineage>
        <taxon>Bacteria</taxon>
        <taxon>Pseudomonadati</taxon>
        <taxon>Pseudomonadota</taxon>
        <taxon>Gammaproteobacteria</taxon>
        <taxon>Enterobacterales</taxon>
        <taxon>Yersiniaceae</taxon>
        <taxon>Yersinia</taxon>
    </lineage>
</organism>
<dbReference type="EC" id="1.8.1.2" evidence="1"/>
<dbReference type="EMBL" id="AL590842">
    <property type="protein sequence ID" value="CAL21961.1"/>
    <property type="molecule type" value="Genomic_DNA"/>
</dbReference>
<dbReference type="EMBL" id="AE009952">
    <property type="protein sequence ID" value="AAM84405.1"/>
    <property type="status" value="ALT_INIT"/>
    <property type="molecule type" value="Genomic_DNA"/>
</dbReference>
<dbReference type="EMBL" id="AE017042">
    <property type="protein sequence ID" value="AAS60589.1"/>
    <property type="status" value="ALT_INIT"/>
    <property type="molecule type" value="Genomic_DNA"/>
</dbReference>
<dbReference type="PIR" id="AF0409">
    <property type="entry name" value="AF0409"/>
</dbReference>
<dbReference type="RefSeq" id="WP_002209381.1">
    <property type="nucleotide sequence ID" value="NZ_WHKM01000007.1"/>
</dbReference>
<dbReference type="RefSeq" id="YP_002348264.1">
    <property type="nucleotide sequence ID" value="NC_003143.1"/>
</dbReference>
<dbReference type="SMR" id="Q8ZBN6"/>
<dbReference type="IntAct" id="Q8ZBN6">
    <property type="interactions" value="7"/>
</dbReference>
<dbReference type="STRING" id="214092.YPO3372"/>
<dbReference type="PaxDb" id="214092-YPO3372"/>
<dbReference type="EnsemblBacteria" id="AAS60589">
    <property type="protein sequence ID" value="AAS60589"/>
    <property type="gene ID" value="YP_0314"/>
</dbReference>
<dbReference type="GeneID" id="57975336"/>
<dbReference type="KEGG" id="ype:YPO3372"/>
<dbReference type="KEGG" id="ypk:y0818"/>
<dbReference type="KEGG" id="ypm:YP_0314"/>
<dbReference type="PATRIC" id="fig|214092.21.peg.3852"/>
<dbReference type="eggNOG" id="COG0369">
    <property type="taxonomic scope" value="Bacteria"/>
</dbReference>
<dbReference type="HOGENOM" id="CLU_001570_17_7_6"/>
<dbReference type="OMA" id="QKRYQRD"/>
<dbReference type="OrthoDB" id="9816402at2"/>
<dbReference type="UniPathway" id="UPA00140">
    <property type="reaction ID" value="UER00207"/>
</dbReference>
<dbReference type="Proteomes" id="UP000000815">
    <property type="component" value="Chromosome"/>
</dbReference>
<dbReference type="Proteomes" id="UP000001019">
    <property type="component" value="Chromosome"/>
</dbReference>
<dbReference type="Proteomes" id="UP000002490">
    <property type="component" value="Chromosome"/>
</dbReference>
<dbReference type="GO" id="GO:0005829">
    <property type="term" value="C:cytosol"/>
    <property type="evidence" value="ECO:0000318"/>
    <property type="project" value="GO_Central"/>
</dbReference>
<dbReference type="GO" id="GO:0050660">
    <property type="term" value="F:flavin adenine dinucleotide binding"/>
    <property type="evidence" value="ECO:0000318"/>
    <property type="project" value="GO_Central"/>
</dbReference>
<dbReference type="GO" id="GO:0010181">
    <property type="term" value="F:FMN binding"/>
    <property type="evidence" value="ECO:0000318"/>
    <property type="project" value="GO_Central"/>
</dbReference>
<dbReference type="GO" id="GO:0016491">
    <property type="term" value="F:oxidoreductase activity"/>
    <property type="evidence" value="ECO:0000318"/>
    <property type="project" value="GO_Central"/>
</dbReference>
<dbReference type="GO" id="GO:0004783">
    <property type="term" value="F:sulfite reductase (NADPH) activity"/>
    <property type="evidence" value="ECO:0007669"/>
    <property type="project" value="UniProtKB-UniRule"/>
</dbReference>
<dbReference type="GO" id="GO:0019344">
    <property type="term" value="P:cysteine biosynthetic process"/>
    <property type="evidence" value="ECO:0007669"/>
    <property type="project" value="UniProtKB-KW"/>
</dbReference>
<dbReference type="GO" id="GO:0070814">
    <property type="term" value="P:hydrogen sulfide biosynthetic process"/>
    <property type="evidence" value="ECO:0007669"/>
    <property type="project" value="UniProtKB-UniRule"/>
</dbReference>
<dbReference type="GO" id="GO:0000103">
    <property type="term" value="P:sulfate assimilation"/>
    <property type="evidence" value="ECO:0007669"/>
    <property type="project" value="UniProtKB-UniRule"/>
</dbReference>
<dbReference type="CDD" id="cd06199">
    <property type="entry name" value="SiR"/>
    <property type="match status" value="1"/>
</dbReference>
<dbReference type="FunFam" id="3.40.50.80:FF:000001">
    <property type="entry name" value="NADPH--cytochrome P450 reductase 1"/>
    <property type="match status" value="1"/>
</dbReference>
<dbReference type="FunFam" id="1.20.990.10:FF:000004">
    <property type="entry name" value="Sulfite reductase [NADPH] flavoprotein alpha-component"/>
    <property type="match status" value="1"/>
</dbReference>
<dbReference type="FunFam" id="3.40.50.360:FF:000018">
    <property type="entry name" value="Sulfite reductase [NADPH] flavoprotein alpha-component"/>
    <property type="match status" value="1"/>
</dbReference>
<dbReference type="Gene3D" id="3.40.50.360">
    <property type="match status" value="1"/>
</dbReference>
<dbReference type="Gene3D" id="1.20.990.10">
    <property type="entry name" value="NADPH-cytochrome p450 Reductase, Chain A, domain 3"/>
    <property type="match status" value="1"/>
</dbReference>
<dbReference type="Gene3D" id="3.40.50.80">
    <property type="entry name" value="Nucleotide-binding domain of ferredoxin-NADP reductase (FNR) module"/>
    <property type="match status" value="1"/>
</dbReference>
<dbReference type="Gene3D" id="2.40.30.10">
    <property type="entry name" value="Translation factors"/>
    <property type="match status" value="1"/>
</dbReference>
<dbReference type="HAMAP" id="MF_01541">
    <property type="entry name" value="CysJ"/>
    <property type="match status" value="1"/>
</dbReference>
<dbReference type="InterPro" id="IPR010199">
    <property type="entry name" value="CysJ"/>
</dbReference>
<dbReference type="InterPro" id="IPR003097">
    <property type="entry name" value="CysJ-like_FAD-binding"/>
</dbReference>
<dbReference type="InterPro" id="IPR029758">
    <property type="entry name" value="CysJ_Proteobact"/>
</dbReference>
<dbReference type="InterPro" id="IPR017927">
    <property type="entry name" value="FAD-bd_FR_type"/>
</dbReference>
<dbReference type="InterPro" id="IPR001094">
    <property type="entry name" value="Flavdoxin-like"/>
</dbReference>
<dbReference type="InterPro" id="IPR008254">
    <property type="entry name" value="Flavodoxin/NO_synth"/>
</dbReference>
<dbReference type="InterPro" id="IPR001709">
    <property type="entry name" value="Flavoprot_Pyr_Nucl_cyt_Rdtase"/>
</dbReference>
<dbReference type="InterPro" id="IPR029039">
    <property type="entry name" value="Flavoprotein-like_sf"/>
</dbReference>
<dbReference type="InterPro" id="IPR039261">
    <property type="entry name" value="FNR_nucleotide-bd"/>
</dbReference>
<dbReference type="InterPro" id="IPR023173">
    <property type="entry name" value="NADPH_Cyt_P450_Rdtase_alpha"/>
</dbReference>
<dbReference type="InterPro" id="IPR001433">
    <property type="entry name" value="OxRdtase_FAD/NAD-bd"/>
</dbReference>
<dbReference type="InterPro" id="IPR017938">
    <property type="entry name" value="Riboflavin_synthase-like_b-brl"/>
</dbReference>
<dbReference type="NCBIfam" id="TIGR01931">
    <property type="entry name" value="cysJ"/>
    <property type="match status" value="1"/>
</dbReference>
<dbReference type="NCBIfam" id="NF008197">
    <property type="entry name" value="PRK10953.1"/>
    <property type="match status" value="1"/>
</dbReference>
<dbReference type="PANTHER" id="PTHR19384:SF128">
    <property type="entry name" value="NADPH OXIDOREDUCTASE A"/>
    <property type="match status" value="1"/>
</dbReference>
<dbReference type="PANTHER" id="PTHR19384">
    <property type="entry name" value="NITRIC OXIDE SYNTHASE-RELATED"/>
    <property type="match status" value="1"/>
</dbReference>
<dbReference type="Pfam" id="PF00667">
    <property type="entry name" value="FAD_binding_1"/>
    <property type="match status" value="1"/>
</dbReference>
<dbReference type="Pfam" id="PF00258">
    <property type="entry name" value="Flavodoxin_1"/>
    <property type="match status" value="1"/>
</dbReference>
<dbReference type="Pfam" id="PF00175">
    <property type="entry name" value="NAD_binding_1"/>
    <property type="match status" value="1"/>
</dbReference>
<dbReference type="PIRSF" id="PIRSF000207">
    <property type="entry name" value="SiR-FP_CysJ"/>
    <property type="match status" value="1"/>
</dbReference>
<dbReference type="PRINTS" id="PR00369">
    <property type="entry name" value="FLAVODOXIN"/>
</dbReference>
<dbReference type="PRINTS" id="PR00371">
    <property type="entry name" value="FPNCR"/>
</dbReference>
<dbReference type="SUPFAM" id="SSF52343">
    <property type="entry name" value="Ferredoxin reductase-like, C-terminal NADP-linked domain"/>
    <property type="match status" value="1"/>
</dbReference>
<dbReference type="SUPFAM" id="SSF52218">
    <property type="entry name" value="Flavoproteins"/>
    <property type="match status" value="1"/>
</dbReference>
<dbReference type="SUPFAM" id="SSF63380">
    <property type="entry name" value="Riboflavin synthase domain-like"/>
    <property type="match status" value="1"/>
</dbReference>
<dbReference type="PROSITE" id="PS51384">
    <property type="entry name" value="FAD_FR"/>
    <property type="match status" value="1"/>
</dbReference>
<dbReference type="PROSITE" id="PS50902">
    <property type="entry name" value="FLAVODOXIN_LIKE"/>
    <property type="match status" value="1"/>
</dbReference>